<evidence type="ECO:0000256" key="1">
    <source>
        <dbReference type="SAM" id="MobiDB-lite"/>
    </source>
</evidence>
<evidence type="ECO:0000305" key="2"/>
<sequence>MSPKPRASGPPAKATEAGKRKSSSQPSPSDPKKKTTKVAKKGKAVRRGRRGKKGAATKMAAVTAPEAESGPAAPGPSDQPSQELPQHELPPEEPVSEGTQHDPLSQESELEEPLSQESEVEEPLSQESQVEEPLSQESEVEEPLSQESQVEEPLSQESEVEEPLSQESQVEEPLSQESEMEELPSV</sequence>
<keyword id="KW-1185">Reference proteome</keyword>
<keyword id="KW-0677">Repeat</keyword>
<protein>
    <recommendedName>
        <fullName>Variable charge X-linked protein 3</fullName>
    </recommendedName>
    <alternativeName>
        <fullName>Variable charge protein on X with eight repeats</fullName>
        <shortName>VCX-8r</shortName>
    </alternativeName>
    <alternativeName>
        <fullName>Variably charged protein X-A</fullName>
        <shortName>VCX-A</shortName>
    </alternativeName>
</protein>
<feature type="chain" id="PRO_0000184661" description="Variable charge X-linked protein 3">
    <location>
        <begin position="1"/>
        <end position="186"/>
    </location>
</feature>
<feature type="repeat" description="1">
    <location>
        <begin position="104"/>
        <end position="113"/>
    </location>
</feature>
<feature type="repeat" description="2">
    <location>
        <begin position="114"/>
        <end position="123"/>
    </location>
</feature>
<feature type="repeat" description="3">
    <location>
        <begin position="124"/>
        <end position="133"/>
    </location>
</feature>
<feature type="repeat" description="4">
    <location>
        <begin position="134"/>
        <end position="143"/>
    </location>
</feature>
<feature type="repeat" description="5">
    <location>
        <begin position="144"/>
        <end position="153"/>
    </location>
</feature>
<feature type="repeat" description="6">
    <location>
        <begin position="154"/>
        <end position="163"/>
    </location>
</feature>
<feature type="repeat" description="7">
    <location>
        <begin position="164"/>
        <end position="173"/>
    </location>
</feature>
<feature type="repeat" description="8">
    <location>
        <begin position="174"/>
        <end position="183"/>
    </location>
</feature>
<feature type="region of interest" description="Disordered" evidence="1">
    <location>
        <begin position="1"/>
        <end position="186"/>
    </location>
</feature>
<feature type="region of interest" description="8 X 10 AA tandem repeats of L-S-Q-E-S-[EQ]-V-E-E-P">
    <location>
        <begin position="104"/>
        <end position="183"/>
    </location>
</feature>
<feature type="compositionally biased region" description="Basic residues" evidence="1">
    <location>
        <begin position="34"/>
        <end position="55"/>
    </location>
</feature>
<feature type="compositionally biased region" description="Low complexity" evidence="1">
    <location>
        <begin position="56"/>
        <end position="84"/>
    </location>
</feature>
<feature type="compositionally biased region" description="Acidic residues" evidence="1">
    <location>
        <begin position="108"/>
        <end position="124"/>
    </location>
</feature>
<feature type="compositionally biased region" description="Low complexity" evidence="1">
    <location>
        <begin position="125"/>
        <end position="137"/>
    </location>
</feature>
<feature type="compositionally biased region" description="Low complexity" evidence="1">
    <location>
        <begin position="145"/>
        <end position="157"/>
    </location>
</feature>
<feature type="compositionally biased region" description="Low complexity" evidence="1">
    <location>
        <begin position="165"/>
        <end position="177"/>
    </location>
</feature>
<feature type="sequence conflict" description="In Ref. 2; AAF28173." evidence="2" ref="2">
    <original>S</original>
    <variation>A</variation>
    <location>
        <position position="108"/>
    </location>
</feature>
<dbReference type="EMBL" id="AJ243947">
    <property type="protein sequence ID" value="CAB56197.1"/>
    <property type="molecule type" value="Genomic_DNA"/>
</dbReference>
<dbReference type="EMBL" id="AF167078">
    <property type="protein sequence ID" value="AAG41764.1"/>
    <property type="molecule type" value="mRNA"/>
</dbReference>
<dbReference type="EMBL" id="AF159128">
    <property type="protein sequence ID" value="AAF28173.1"/>
    <property type="molecule type" value="mRNA"/>
</dbReference>
<dbReference type="CCDS" id="CCDS35199.1"/>
<dbReference type="RefSeq" id="NP_057463.2">
    <property type="nucleotide sequence ID" value="NM_016379.3"/>
</dbReference>
<dbReference type="SMR" id="Q9NNX9"/>
<dbReference type="BioGRID" id="119566">
    <property type="interactions" value="1"/>
</dbReference>
<dbReference type="FunCoup" id="Q9NNX9">
    <property type="interactions" value="16"/>
</dbReference>
<dbReference type="STRING" id="9606.ENSP00000370479"/>
<dbReference type="iPTMnet" id="Q9NNX9"/>
<dbReference type="PhosphoSitePlus" id="Q9NNX9"/>
<dbReference type="BioMuta" id="VCX3A"/>
<dbReference type="MassIVE" id="Q9NNX9"/>
<dbReference type="PaxDb" id="9606-ENSP00000370479"/>
<dbReference type="PeptideAtlas" id="Q9NNX9"/>
<dbReference type="Antibodypedia" id="23556">
    <property type="antibodies" value="98 antibodies from 15 providers"/>
</dbReference>
<dbReference type="DNASU" id="51481"/>
<dbReference type="Ensembl" id="ENST00000381089.7">
    <property type="protein sequence ID" value="ENSP00000370479.3"/>
    <property type="gene ID" value="ENSG00000169059.13"/>
</dbReference>
<dbReference type="GeneID" id="51481"/>
<dbReference type="KEGG" id="hsa:51481"/>
<dbReference type="MANE-Select" id="ENST00000381089.7">
    <property type="protein sequence ID" value="ENSP00000370479.3"/>
    <property type="RefSeq nucleotide sequence ID" value="NM_016379.4"/>
    <property type="RefSeq protein sequence ID" value="NP_057463.2"/>
</dbReference>
<dbReference type="UCSC" id="uc004crs.3">
    <property type="organism name" value="human"/>
</dbReference>
<dbReference type="AGR" id="HGNC:18159"/>
<dbReference type="CTD" id="51481"/>
<dbReference type="DisGeNET" id="51481"/>
<dbReference type="GeneCards" id="VCX3A"/>
<dbReference type="HGNC" id="HGNC:18159">
    <property type="gene designation" value="VCX3A"/>
</dbReference>
<dbReference type="HPA" id="ENSG00000169059">
    <property type="expression patterns" value="Tissue enriched (testis)"/>
</dbReference>
<dbReference type="MalaCards" id="VCX3A"/>
<dbReference type="MIM" id="300533">
    <property type="type" value="gene"/>
</dbReference>
<dbReference type="neXtProt" id="NX_Q9NNX9"/>
<dbReference type="OpenTargets" id="ENSG00000169059"/>
<dbReference type="PharmGKB" id="PA134936169"/>
<dbReference type="VEuPathDB" id="HostDB:ENSG00000169059"/>
<dbReference type="eggNOG" id="KOG3216">
    <property type="taxonomic scope" value="Eukaryota"/>
</dbReference>
<dbReference type="GeneTree" id="ENSGT00440000034745"/>
<dbReference type="InParanoid" id="Q9NNX9"/>
<dbReference type="PAN-GO" id="Q9NNX9">
    <property type="GO annotations" value="1 GO annotation based on evolutionary models"/>
</dbReference>
<dbReference type="PathwayCommons" id="Q9NNX9"/>
<dbReference type="BioGRID-ORCS" id="51481">
    <property type="hits" value="5 hits in 292 CRISPR screens"/>
</dbReference>
<dbReference type="GenomeRNAi" id="51481"/>
<dbReference type="Pharos" id="Q9NNX9">
    <property type="development level" value="Tbio"/>
</dbReference>
<dbReference type="PRO" id="PR:Q9NNX9"/>
<dbReference type="Proteomes" id="UP000005640">
    <property type="component" value="Chromosome X"/>
</dbReference>
<dbReference type="RNAct" id="Q9NNX9">
    <property type="molecule type" value="protein"/>
</dbReference>
<dbReference type="Bgee" id="ENSG00000169059">
    <property type="expression patterns" value="Expressed in left testis and 63 other cell types or tissues"/>
</dbReference>
<dbReference type="ExpressionAtlas" id="Q9NNX9">
    <property type="expression patterns" value="baseline and differential"/>
</dbReference>
<dbReference type="GO" id="GO:0005730">
    <property type="term" value="C:nucleolus"/>
    <property type="evidence" value="ECO:0000250"/>
    <property type="project" value="UniProtKB"/>
</dbReference>
<dbReference type="GO" id="GO:0005634">
    <property type="term" value="C:nucleus"/>
    <property type="evidence" value="ECO:0000250"/>
    <property type="project" value="UniProtKB"/>
</dbReference>
<dbReference type="GO" id="GO:0007420">
    <property type="term" value="P:brain development"/>
    <property type="evidence" value="ECO:0000315"/>
    <property type="project" value="UniProtKB"/>
</dbReference>
<dbReference type="InterPro" id="IPR026653">
    <property type="entry name" value="VCX/VCY1"/>
</dbReference>
<dbReference type="PANTHER" id="PTHR15251">
    <property type="entry name" value="TESTIS-SPECIFIC BASIC PROTEIN Y 1-RELATED"/>
    <property type="match status" value="1"/>
</dbReference>
<dbReference type="PANTHER" id="PTHR15251:SF2">
    <property type="entry name" value="TESTIS-SPECIFIC BASIC PROTEIN Y 1-RELATED"/>
    <property type="match status" value="1"/>
</dbReference>
<dbReference type="Pfam" id="PF15231">
    <property type="entry name" value="VCX_VCY"/>
    <property type="match status" value="1"/>
</dbReference>
<gene>
    <name type="primary">VCX3A</name>
    <name type="synonym">VCX3</name>
    <name type="synonym">VCX8R</name>
    <name type="synonym">VCXA</name>
</gene>
<accession>Q9NNX9</accession>
<accession>Q9P0H4</accession>
<comment type="function">
    <text>May mediate a process in spermatogenesis or may play a role in sex ratio distortion.</text>
</comment>
<comment type="tissue specificity">
    <text>Expressed exclusively in testis.</text>
</comment>
<comment type="similarity">
    <text evidence="2">Belongs to the VCX/VCY family.</text>
</comment>
<organism>
    <name type="scientific">Homo sapiens</name>
    <name type="common">Human</name>
    <dbReference type="NCBI Taxonomy" id="9606"/>
    <lineage>
        <taxon>Eukaryota</taxon>
        <taxon>Metazoa</taxon>
        <taxon>Chordata</taxon>
        <taxon>Craniata</taxon>
        <taxon>Vertebrata</taxon>
        <taxon>Euteleostomi</taxon>
        <taxon>Mammalia</taxon>
        <taxon>Eutheria</taxon>
        <taxon>Euarchontoglires</taxon>
        <taxon>Primates</taxon>
        <taxon>Haplorrhini</taxon>
        <taxon>Catarrhini</taxon>
        <taxon>Hominidae</taxon>
        <taxon>Homo</taxon>
    </lineage>
</organism>
<reference key="1">
    <citation type="journal article" date="2000" name="Am. J. Hum. Genet.">
        <title>A member of a gene family on Xp22.3, VCX-A, is deleted in patients with X-linked nonspecific mental retardation.</title>
        <authorList>
            <person name="Fukami M."/>
            <person name="Kirsch S."/>
            <person name="Schiller S."/>
            <person name="Richter A."/>
            <person name="Benes V."/>
            <person name="Franco B."/>
            <person name="Muroya K."/>
            <person name="Rao E."/>
            <person name="Merker S."/>
            <person name="Niesler B."/>
            <person name="Ballabio A."/>
            <person name="Ansorge W."/>
            <person name="Ogata T."/>
            <person name="Rappold G.A."/>
        </authorList>
    </citation>
    <scope>NUCLEOTIDE SEQUENCE [GENOMIC DNA / MRNA]</scope>
</reference>
<reference key="2">
    <citation type="journal article" date="2000" name="Hum. Mol. Genet.">
        <title>A human sex-chromosomal gene family expressed in male germ cells and encoding variably charged proteins.</title>
        <authorList>
            <person name="Lahn B.T."/>
            <person name="Page D.C."/>
        </authorList>
    </citation>
    <scope>NUCLEOTIDE SEQUENCE [MRNA]</scope>
</reference>
<name>VCX3_HUMAN</name>
<proteinExistence type="evidence at transcript level"/>